<gene>
    <name evidence="1" type="primary">dapE</name>
    <name type="ordered locus">Rmag_0274</name>
</gene>
<sequence length="376" mass="41382">MNKTLKLAKNLVSIDSITPQDKGCQSIMTNHLSHLNFKITDLKFGEVDNFWAIRGHQSPVFVFAGHTDVVPVGDELKWHISPFSAQVQDGMLHGRGTADMKGSLAAMLSATDRFVKDYPNHKGSIGYLITSDEEGPATDGTVKVAKYLKEINQIVDYCLVGEPSATNELGDVIKNGRRGSLNGILKIIGKQGHIAYPHLADNPIHLAISALNDLCNEVWDKGNEYFPATSFQISNIHSGTGVTNIIPGESDVVLNFRYSTQNTHKQLQSRVCVILNKHNFEYQITWEHSGYPFLTPKGKLVNACTNAIKTVKNINTQLSTSGGTSDGRFIALILKAQVVELGPLNATIHQVDECVSIQDLEDLSDIYYHVLKNILT</sequence>
<reference key="1">
    <citation type="journal article" date="2007" name="Science">
        <title>The Calyptogena magnifica chemoautotrophic symbiont genome.</title>
        <authorList>
            <person name="Newton I.L.G."/>
            <person name="Woyke T."/>
            <person name="Auchtung T.A."/>
            <person name="Dilly G.F."/>
            <person name="Dutton R.J."/>
            <person name="Fisher M.C."/>
            <person name="Fontanez K.M."/>
            <person name="Lau E."/>
            <person name="Stewart F.J."/>
            <person name="Richardson P.M."/>
            <person name="Barry K.W."/>
            <person name="Saunders E."/>
            <person name="Detter J.C."/>
            <person name="Wu D."/>
            <person name="Eisen J.A."/>
            <person name="Cavanaugh C.M."/>
        </authorList>
    </citation>
    <scope>NUCLEOTIDE SEQUENCE [LARGE SCALE GENOMIC DNA]</scope>
</reference>
<keyword id="KW-0028">Amino-acid biosynthesis</keyword>
<keyword id="KW-0170">Cobalt</keyword>
<keyword id="KW-0220">Diaminopimelate biosynthesis</keyword>
<keyword id="KW-0378">Hydrolase</keyword>
<keyword id="KW-0457">Lysine biosynthesis</keyword>
<keyword id="KW-0479">Metal-binding</keyword>
<keyword id="KW-0862">Zinc</keyword>
<dbReference type="EC" id="3.5.1.18" evidence="1"/>
<dbReference type="EMBL" id="CP000488">
    <property type="protein sequence ID" value="ABL02056.1"/>
    <property type="molecule type" value="Genomic_DNA"/>
</dbReference>
<dbReference type="RefSeq" id="WP_011737681.1">
    <property type="nucleotide sequence ID" value="NC_008610.1"/>
</dbReference>
<dbReference type="SMR" id="A1AVU9"/>
<dbReference type="STRING" id="413404.Rmag_0274"/>
<dbReference type="KEGG" id="rma:Rmag_0274"/>
<dbReference type="eggNOG" id="COG0624">
    <property type="taxonomic scope" value="Bacteria"/>
</dbReference>
<dbReference type="HOGENOM" id="CLU_021802_4_0_6"/>
<dbReference type="OrthoDB" id="9809784at2"/>
<dbReference type="UniPathway" id="UPA00034">
    <property type="reaction ID" value="UER00021"/>
</dbReference>
<dbReference type="Proteomes" id="UP000002587">
    <property type="component" value="Chromosome"/>
</dbReference>
<dbReference type="GO" id="GO:0008777">
    <property type="term" value="F:acetylornithine deacetylase activity"/>
    <property type="evidence" value="ECO:0007669"/>
    <property type="project" value="TreeGrafter"/>
</dbReference>
<dbReference type="GO" id="GO:0050897">
    <property type="term" value="F:cobalt ion binding"/>
    <property type="evidence" value="ECO:0007669"/>
    <property type="project" value="UniProtKB-UniRule"/>
</dbReference>
<dbReference type="GO" id="GO:0009014">
    <property type="term" value="F:succinyl-diaminopimelate desuccinylase activity"/>
    <property type="evidence" value="ECO:0007669"/>
    <property type="project" value="UniProtKB-UniRule"/>
</dbReference>
<dbReference type="GO" id="GO:0008270">
    <property type="term" value="F:zinc ion binding"/>
    <property type="evidence" value="ECO:0007669"/>
    <property type="project" value="UniProtKB-UniRule"/>
</dbReference>
<dbReference type="GO" id="GO:0019877">
    <property type="term" value="P:diaminopimelate biosynthetic process"/>
    <property type="evidence" value="ECO:0007669"/>
    <property type="project" value="UniProtKB-UniRule"/>
</dbReference>
<dbReference type="GO" id="GO:0006526">
    <property type="term" value="P:L-arginine biosynthetic process"/>
    <property type="evidence" value="ECO:0007669"/>
    <property type="project" value="TreeGrafter"/>
</dbReference>
<dbReference type="GO" id="GO:0009089">
    <property type="term" value="P:lysine biosynthetic process via diaminopimelate"/>
    <property type="evidence" value="ECO:0007669"/>
    <property type="project" value="UniProtKB-UniRule"/>
</dbReference>
<dbReference type="CDD" id="cd03891">
    <property type="entry name" value="M20_DapE_proteobac"/>
    <property type="match status" value="1"/>
</dbReference>
<dbReference type="FunFam" id="3.40.630.10:FF:000005">
    <property type="entry name" value="Succinyl-diaminopimelate desuccinylase"/>
    <property type="match status" value="1"/>
</dbReference>
<dbReference type="Gene3D" id="3.30.70.360">
    <property type="match status" value="1"/>
</dbReference>
<dbReference type="Gene3D" id="3.40.630.10">
    <property type="entry name" value="Zn peptidases"/>
    <property type="match status" value="1"/>
</dbReference>
<dbReference type="HAMAP" id="MF_01690">
    <property type="entry name" value="DapE"/>
    <property type="match status" value="1"/>
</dbReference>
<dbReference type="InterPro" id="IPR036264">
    <property type="entry name" value="Bact_exopeptidase_dim_dom"/>
</dbReference>
<dbReference type="InterPro" id="IPR005941">
    <property type="entry name" value="DapE_proteobac"/>
</dbReference>
<dbReference type="InterPro" id="IPR002933">
    <property type="entry name" value="Peptidase_M20"/>
</dbReference>
<dbReference type="InterPro" id="IPR011650">
    <property type="entry name" value="Peptidase_M20_dimer"/>
</dbReference>
<dbReference type="InterPro" id="IPR050072">
    <property type="entry name" value="Peptidase_M20A"/>
</dbReference>
<dbReference type="NCBIfam" id="TIGR01246">
    <property type="entry name" value="dapE_proteo"/>
    <property type="match status" value="1"/>
</dbReference>
<dbReference type="NCBIfam" id="NF009557">
    <property type="entry name" value="PRK13009.1"/>
    <property type="match status" value="1"/>
</dbReference>
<dbReference type="PANTHER" id="PTHR43808">
    <property type="entry name" value="ACETYLORNITHINE DEACETYLASE"/>
    <property type="match status" value="1"/>
</dbReference>
<dbReference type="PANTHER" id="PTHR43808:SF31">
    <property type="entry name" value="N-ACETYL-L-CITRULLINE DEACETYLASE"/>
    <property type="match status" value="1"/>
</dbReference>
<dbReference type="Pfam" id="PF07687">
    <property type="entry name" value="M20_dimer"/>
    <property type="match status" value="1"/>
</dbReference>
<dbReference type="Pfam" id="PF01546">
    <property type="entry name" value="Peptidase_M20"/>
    <property type="match status" value="1"/>
</dbReference>
<dbReference type="SUPFAM" id="SSF55031">
    <property type="entry name" value="Bacterial exopeptidase dimerisation domain"/>
    <property type="match status" value="1"/>
</dbReference>
<dbReference type="SUPFAM" id="SSF53187">
    <property type="entry name" value="Zn-dependent exopeptidases"/>
    <property type="match status" value="1"/>
</dbReference>
<organism>
    <name type="scientific">Ruthia magnifica subsp. Calyptogena magnifica</name>
    <dbReference type="NCBI Taxonomy" id="413404"/>
    <lineage>
        <taxon>Bacteria</taxon>
        <taxon>Pseudomonadati</taxon>
        <taxon>Pseudomonadota</taxon>
        <taxon>Gammaproteobacteria</taxon>
        <taxon>Candidatus Pseudothioglobaceae</taxon>
        <taxon>Candidatus Ruthturnera</taxon>
    </lineage>
</organism>
<comment type="function">
    <text evidence="1">Catalyzes the hydrolysis of N-succinyl-L,L-diaminopimelic acid (SDAP), forming succinate and LL-2,6-diaminopimelate (DAP), an intermediate involved in the bacterial biosynthesis of lysine and meso-diaminopimelic acid, an essential component of bacterial cell walls.</text>
</comment>
<comment type="catalytic activity">
    <reaction evidence="1">
        <text>N-succinyl-(2S,6S)-2,6-diaminopimelate + H2O = (2S,6S)-2,6-diaminopimelate + succinate</text>
        <dbReference type="Rhea" id="RHEA:22608"/>
        <dbReference type="ChEBI" id="CHEBI:15377"/>
        <dbReference type="ChEBI" id="CHEBI:30031"/>
        <dbReference type="ChEBI" id="CHEBI:57609"/>
        <dbReference type="ChEBI" id="CHEBI:58087"/>
        <dbReference type="EC" id="3.5.1.18"/>
    </reaction>
</comment>
<comment type="cofactor">
    <cofactor evidence="1">
        <name>Zn(2+)</name>
        <dbReference type="ChEBI" id="CHEBI:29105"/>
    </cofactor>
    <cofactor evidence="1">
        <name>Co(2+)</name>
        <dbReference type="ChEBI" id="CHEBI:48828"/>
    </cofactor>
    <text evidence="1">Binds 2 Zn(2+) or Co(2+) ions per subunit.</text>
</comment>
<comment type="pathway">
    <text evidence="1">Amino-acid biosynthesis; L-lysine biosynthesis via DAP pathway; LL-2,6-diaminopimelate from (S)-tetrahydrodipicolinate (succinylase route): step 3/3.</text>
</comment>
<comment type="subunit">
    <text evidence="1">Homodimer.</text>
</comment>
<comment type="similarity">
    <text evidence="1">Belongs to the peptidase M20A family. DapE subfamily.</text>
</comment>
<accession>A1AVU9</accession>
<proteinExistence type="inferred from homology"/>
<feature type="chain" id="PRO_0000375709" description="Succinyl-diaminopimelate desuccinylase">
    <location>
        <begin position="1"/>
        <end position="376"/>
    </location>
</feature>
<feature type="active site" evidence="1">
    <location>
        <position position="68"/>
    </location>
</feature>
<feature type="active site" description="Proton acceptor" evidence="1">
    <location>
        <position position="133"/>
    </location>
</feature>
<feature type="binding site" evidence="1">
    <location>
        <position position="66"/>
    </location>
    <ligand>
        <name>Zn(2+)</name>
        <dbReference type="ChEBI" id="CHEBI:29105"/>
        <label>1</label>
    </ligand>
</feature>
<feature type="binding site" evidence="1">
    <location>
        <position position="99"/>
    </location>
    <ligand>
        <name>Zn(2+)</name>
        <dbReference type="ChEBI" id="CHEBI:29105"/>
        <label>1</label>
    </ligand>
</feature>
<feature type="binding site" evidence="1">
    <location>
        <position position="99"/>
    </location>
    <ligand>
        <name>Zn(2+)</name>
        <dbReference type="ChEBI" id="CHEBI:29105"/>
        <label>2</label>
    </ligand>
</feature>
<feature type="binding site" evidence="1">
    <location>
        <position position="134"/>
    </location>
    <ligand>
        <name>Zn(2+)</name>
        <dbReference type="ChEBI" id="CHEBI:29105"/>
        <label>2</label>
    </ligand>
</feature>
<feature type="binding site" evidence="1">
    <location>
        <position position="162"/>
    </location>
    <ligand>
        <name>Zn(2+)</name>
        <dbReference type="ChEBI" id="CHEBI:29105"/>
        <label>1</label>
    </ligand>
</feature>
<feature type="binding site" evidence="1">
    <location>
        <position position="349"/>
    </location>
    <ligand>
        <name>Zn(2+)</name>
        <dbReference type="ChEBI" id="CHEBI:29105"/>
        <label>2</label>
    </ligand>
</feature>
<name>DAPE_RUTMC</name>
<evidence type="ECO:0000255" key="1">
    <source>
        <dbReference type="HAMAP-Rule" id="MF_01690"/>
    </source>
</evidence>
<protein>
    <recommendedName>
        <fullName evidence="1">Succinyl-diaminopimelate desuccinylase</fullName>
        <shortName evidence="1">SDAP desuccinylase</shortName>
        <ecNumber evidence="1">3.5.1.18</ecNumber>
    </recommendedName>
    <alternativeName>
        <fullName evidence="1">N-succinyl-LL-2,6-diaminoheptanedioate amidohydrolase</fullName>
    </alternativeName>
</protein>